<gene>
    <name evidence="1" type="primary">nfo</name>
    <name type="ordered locus">DVU_1224</name>
</gene>
<sequence>MPLFGAHMSAAGGVSNAIRDIVEIGGEVLQLFTANQRQWTPKAPSEADVEAFGRRRAAFGGPVFSHASYLINIANGDGAASAKAVEALVREFERCTALGVDAVVLHPGAHLGAGRGTGILRAARNIDEVFDRCGGQTPVLLLENTAGQGTCLGGDLNDLAEIIDASRHASQLGVCLDTAHAFGAGYALHTDEGYRRCMEDIEHGPGLAAVRLFHVNDSLVPCGSRKDRHTHIGEGQLGEAAFVRLLNDPVFAMHPMVLETPKEDGHAADRRNLATLRRLARS</sequence>
<name>END4_NITV2</name>
<proteinExistence type="inferred from homology"/>
<keyword id="KW-0227">DNA damage</keyword>
<keyword id="KW-0234">DNA repair</keyword>
<keyword id="KW-0255">Endonuclease</keyword>
<keyword id="KW-0378">Hydrolase</keyword>
<keyword id="KW-0479">Metal-binding</keyword>
<keyword id="KW-0540">Nuclease</keyword>
<keyword id="KW-1185">Reference proteome</keyword>
<keyword id="KW-0862">Zinc</keyword>
<protein>
    <recommendedName>
        <fullName evidence="1">Probable endonuclease 4</fullName>
        <ecNumber evidence="1">3.1.21.2</ecNumber>
    </recommendedName>
    <alternativeName>
        <fullName evidence="1">Endodeoxyribonuclease IV</fullName>
    </alternativeName>
    <alternativeName>
        <fullName evidence="1">Endonuclease IV</fullName>
    </alternativeName>
</protein>
<evidence type="ECO:0000255" key="1">
    <source>
        <dbReference type="HAMAP-Rule" id="MF_00152"/>
    </source>
</evidence>
<comment type="function">
    <text evidence="1">Endonuclease IV plays a role in DNA repair. It cleaves phosphodiester bonds at apurinic or apyrimidinic (AP) sites, generating a 3'-hydroxyl group and a 5'-terminal sugar phosphate.</text>
</comment>
<comment type="catalytic activity">
    <reaction evidence="1">
        <text>Endonucleolytic cleavage to 5'-phosphooligonucleotide end-products.</text>
        <dbReference type="EC" id="3.1.21.2"/>
    </reaction>
</comment>
<comment type="cofactor">
    <cofactor evidence="1">
        <name>Zn(2+)</name>
        <dbReference type="ChEBI" id="CHEBI:29105"/>
    </cofactor>
    <text evidence="1">Binds 3 Zn(2+) ions.</text>
</comment>
<comment type="similarity">
    <text evidence="1">Belongs to the AP endonuclease 2 family.</text>
</comment>
<reference key="1">
    <citation type="journal article" date="2004" name="Nat. Biotechnol.">
        <title>The genome sequence of the anaerobic, sulfate-reducing bacterium Desulfovibrio vulgaris Hildenborough.</title>
        <authorList>
            <person name="Heidelberg J.F."/>
            <person name="Seshadri R."/>
            <person name="Haveman S.A."/>
            <person name="Hemme C.L."/>
            <person name="Paulsen I.T."/>
            <person name="Kolonay J.F."/>
            <person name="Eisen J.A."/>
            <person name="Ward N.L."/>
            <person name="Methe B.A."/>
            <person name="Brinkac L.M."/>
            <person name="Daugherty S.C."/>
            <person name="DeBoy R.T."/>
            <person name="Dodson R.J."/>
            <person name="Durkin A.S."/>
            <person name="Madupu R."/>
            <person name="Nelson W.C."/>
            <person name="Sullivan S.A."/>
            <person name="Fouts D.E."/>
            <person name="Haft D.H."/>
            <person name="Selengut J."/>
            <person name="Peterson J.D."/>
            <person name="Davidsen T.M."/>
            <person name="Zafar N."/>
            <person name="Zhou L."/>
            <person name="Radune D."/>
            <person name="Dimitrov G."/>
            <person name="Hance M."/>
            <person name="Tran K."/>
            <person name="Khouri H.M."/>
            <person name="Gill J."/>
            <person name="Utterback T.R."/>
            <person name="Feldblyum T.V."/>
            <person name="Wall J.D."/>
            <person name="Voordouw G."/>
            <person name="Fraser C.M."/>
        </authorList>
    </citation>
    <scope>NUCLEOTIDE SEQUENCE [LARGE SCALE GENOMIC DNA]</scope>
    <source>
        <strain>ATCC 29579 / DSM 644 / CCUG 34227 / NCIMB 8303 / VKM B-1760 / Hildenborough</strain>
    </source>
</reference>
<dbReference type="EC" id="3.1.21.2" evidence="1"/>
<dbReference type="EMBL" id="AE017285">
    <property type="protein sequence ID" value="AAS95702.1"/>
    <property type="molecule type" value="Genomic_DNA"/>
</dbReference>
<dbReference type="RefSeq" id="WP_010938520.1">
    <property type="nucleotide sequence ID" value="NC_002937.3"/>
</dbReference>
<dbReference type="RefSeq" id="YP_010443.1">
    <property type="nucleotide sequence ID" value="NC_002937.3"/>
</dbReference>
<dbReference type="SMR" id="Q72CQ9"/>
<dbReference type="STRING" id="882.DVU_1224"/>
<dbReference type="PaxDb" id="882-DVU_1224"/>
<dbReference type="EnsemblBacteria" id="AAS95702">
    <property type="protein sequence ID" value="AAS95702"/>
    <property type="gene ID" value="DVU_1224"/>
</dbReference>
<dbReference type="KEGG" id="dvu:DVU_1224"/>
<dbReference type="PATRIC" id="fig|882.5.peg.1147"/>
<dbReference type="eggNOG" id="COG0648">
    <property type="taxonomic scope" value="Bacteria"/>
</dbReference>
<dbReference type="HOGENOM" id="CLU_025885_0_1_7"/>
<dbReference type="OrthoDB" id="9805666at2"/>
<dbReference type="PhylomeDB" id="Q72CQ9"/>
<dbReference type="Proteomes" id="UP000002194">
    <property type="component" value="Chromosome"/>
</dbReference>
<dbReference type="GO" id="GO:0008833">
    <property type="term" value="F:deoxyribonuclease IV (phage-T4-induced) activity"/>
    <property type="evidence" value="ECO:0007669"/>
    <property type="project" value="UniProtKB-UniRule"/>
</dbReference>
<dbReference type="GO" id="GO:0003677">
    <property type="term" value="F:DNA binding"/>
    <property type="evidence" value="ECO:0007669"/>
    <property type="project" value="InterPro"/>
</dbReference>
<dbReference type="GO" id="GO:0003906">
    <property type="term" value="F:DNA-(apurinic or apyrimidinic site) endonuclease activity"/>
    <property type="evidence" value="ECO:0007669"/>
    <property type="project" value="TreeGrafter"/>
</dbReference>
<dbReference type="GO" id="GO:0008081">
    <property type="term" value="F:phosphoric diester hydrolase activity"/>
    <property type="evidence" value="ECO:0007669"/>
    <property type="project" value="TreeGrafter"/>
</dbReference>
<dbReference type="GO" id="GO:0008270">
    <property type="term" value="F:zinc ion binding"/>
    <property type="evidence" value="ECO:0007669"/>
    <property type="project" value="UniProtKB-UniRule"/>
</dbReference>
<dbReference type="GO" id="GO:0006284">
    <property type="term" value="P:base-excision repair"/>
    <property type="evidence" value="ECO:0007669"/>
    <property type="project" value="TreeGrafter"/>
</dbReference>
<dbReference type="CDD" id="cd00019">
    <property type="entry name" value="AP2Ec"/>
    <property type="match status" value="1"/>
</dbReference>
<dbReference type="FunFam" id="3.20.20.150:FF:000001">
    <property type="entry name" value="Probable endonuclease 4"/>
    <property type="match status" value="1"/>
</dbReference>
<dbReference type="Gene3D" id="3.20.20.150">
    <property type="entry name" value="Divalent-metal-dependent TIM barrel enzymes"/>
    <property type="match status" value="1"/>
</dbReference>
<dbReference type="HAMAP" id="MF_00152">
    <property type="entry name" value="Nfo"/>
    <property type="match status" value="1"/>
</dbReference>
<dbReference type="InterPro" id="IPR001719">
    <property type="entry name" value="AP_endonuc_2"/>
</dbReference>
<dbReference type="InterPro" id="IPR018246">
    <property type="entry name" value="AP_endonuc_F2_Zn_BS"/>
</dbReference>
<dbReference type="InterPro" id="IPR036237">
    <property type="entry name" value="Xyl_isomerase-like_sf"/>
</dbReference>
<dbReference type="InterPro" id="IPR013022">
    <property type="entry name" value="Xyl_isomerase-like_TIM-brl"/>
</dbReference>
<dbReference type="NCBIfam" id="TIGR00587">
    <property type="entry name" value="nfo"/>
    <property type="match status" value="1"/>
</dbReference>
<dbReference type="PANTHER" id="PTHR21445:SF0">
    <property type="entry name" value="APURINIC-APYRIMIDINIC ENDONUCLEASE"/>
    <property type="match status" value="1"/>
</dbReference>
<dbReference type="PANTHER" id="PTHR21445">
    <property type="entry name" value="ENDONUCLEASE IV ENDODEOXYRIBONUCLEASE IV"/>
    <property type="match status" value="1"/>
</dbReference>
<dbReference type="Pfam" id="PF01261">
    <property type="entry name" value="AP_endonuc_2"/>
    <property type="match status" value="1"/>
</dbReference>
<dbReference type="SMART" id="SM00518">
    <property type="entry name" value="AP2Ec"/>
    <property type="match status" value="1"/>
</dbReference>
<dbReference type="SUPFAM" id="SSF51658">
    <property type="entry name" value="Xylose isomerase-like"/>
    <property type="match status" value="1"/>
</dbReference>
<dbReference type="PROSITE" id="PS00729">
    <property type="entry name" value="AP_NUCLEASE_F2_1"/>
    <property type="match status" value="1"/>
</dbReference>
<dbReference type="PROSITE" id="PS00731">
    <property type="entry name" value="AP_NUCLEASE_F2_3"/>
    <property type="match status" value="1"/>
</dbReference>
<dbReference type="PROSITE" id="PS51432">
    <property type="entry name" value="AP_NUCLEASE_F2_4"/>
    <property type="match status" value="1"/>
</dbReference>
<feature type="chain" id="PRO_0000190837" description="Probable endonuclease 4">
    <location>
        <begin position="1"/>
        <end position="282"/>
    </location>
</feature>
<feature type="binding site" evidence="1">
    <location>
        <position position="66"/>
    </location>
    <ligand>
        <name>Zn(2+)</name>
        <dbReference type="ChEBI" id="CHEBI:29105"/>
        <label>1</label>
    </ligand>
</feature>
<feature type="binding site" evidence="1">
    <location>
        <position position="106"/>
    </location>
    <ligand>
        <name>Zn(2+)</name>
        <dbReference type="ChEBI" id="CHEBI:29105"/>
        <label>1</label>
    </ligand>
</feature>
<feature type="binding site" evidence="1">
    <location>
        <position position="143"/>
    </location>
    <ligand>
        <name>Zn(2+)</name>
        <dbReference type="ChEBI" id="CHEBI:29105"/>
        <label>1</label>
    </ligand>
</feature>
<feature type="binding site" evidence="1">
    <location>
        <position position="143"/>
    </location>
    <ligand>
        <name>Zn(2+)</name>
        <dbReference type="ChEBI" id="CHEBI:29105"/>
        <label>2</label>
    </ligand>
</feature>
<feature type="binding site" evidence="1">
    <location>
        <position position="177"/>
    </location>
    <ligand>
        <name>Zn(2+)</name>
        <dbReference type="ChEBI" id="CHEBI:29105"/>
        <label>2</label>
    </ligand>
</feature>
<feature type="binding site" evidence="1">
    <location>
        <position position="180"/>
    </location>
    <ligand>
        <name>Zn(2+)</name>
        <dbReference type="ChEBI" id="CHEBI:29105"/>
        <label>3</label>
    </ligand>
</feature>
<feature type="binding site" evidence="1">
    <location>
        <position position="214"/>
    </location>
    <ligand>
        <name>Zn(2+)</name>
        <dbReference type="ChEBI" id="CHEBI:29105"/>
        <label>2</label>
    </ligand>
</feature>
<feature type="binding site" evidence="1">
    <location>
        <position position="227"/>
    </location>
    <ligand>
        <name>Zn(2+)</name>
        <dbReference type="ChEBI" id="CHEBI:29105"/>
        <label>3</label>
    </ligand>
</feature>
<feature type="binding site" evidence="1">
    <location>
        <position position="229"/>
    </location>
    <ligand>
        <name>Zn(2+)</name>
        <dbReference type="ChEBI" id="CHEBI:29105"/>
        <label>3</label>
    </ligand>
</feature>
<feature type="binding site" evidence="1">
    <location>
        <position position="259"/>
    </location>
    <ligand>
        <name>Zn(2+)</name>
        <dbReference type="ChEBI" id="CHEBI:29105"/>
        <label>2</label>
    </ligand>
</feature>
<accession>Q72CQ9</accession>
<organism>
    <name type="scientific">Nitratidesulfovibrio vulgaris (strain ATCC 29579 / DSM 644 / CCUG 34227 / NCIMB 8303 / VKM B-1760 / Hildenborough)</name>
    <name type="common">Desulfovibrio vulgaris</name>
    <dbReference type="NCBI Taxonomy" id="882"/>
    <lineage>
        <taxon>Bacteria</taxon>
        <taxon>Pseudomonadati</taxon>
        <taxon>Thermodesulfobacteriota</taxon>
        <taxon>Desulfovibrionia</taxon>
        <taxon>Desulfovibrionales</taxon>
        <taxon>Desulfovibrionaceae</taxon>
        <taxon>Nitratidesulfovibrio</taxon>
    </lineage>
</organism>